<name>RK16_CHLSP</name>
<sequence>MLSPKRTKFRKPHRGHLRGKATRGNTIVFGDFALQAQEPCWITSRQIEAGRRVLTRYVRRGGKLWIRIFPDKAVTMRPAGTRMGSGKGAPDYWVAVVHPGKILYEMQGVSETIARQAMRIAAYKMPVKTKFLTKQA</sequence>
<protein>
    <recommendedName>
        <fullName evidence="1">Large ribosomal subunit protein uL16c</fullName>
    </recommendedName>
    <alternativeName>
        <fullName evidence="2">50S ribosomal protein L16, chloroplastic</fullName>
    </alternativeName>
</protein>
<geneLocation type="chloroplast"/>
<gene>
    <name evidence="1" type="primary">rpl16</name>
</gene>
<dbReference type="EMBL" id="X05201">
    <property type="protein sequence ID" value="CAA28834.1"/>
    <property type="molecule type" value="Genomic_DNA"/>
</dbReference>
<dbReference type="PIR" id="S06258">
    <property type="entry name" value="R5KM16"/>
</dbReference>
<dbReference type="SMR" id="P05727"/>
<dbReference type="GO" id="GO:0009507">
    <property type="term" value="C:chloroplast"/>
    <property type="evidence" value="ECO:0007669"/>
    <property type="project" value="UniProtKB-SubCell"/>
</dbReference>
<dbReference type="GO" id="GO:0005762">
    <property type="term" value="C:mitochondrial large ribosomal subunit"/>
    <property type="evidence" value="ECO:0007669"/>
    <property type="project" value="TreeGrafter"/>
</dbReference>
<dbReference type="GO" id="GO:0019843">
    <property type="term" value="F:rRNA binding"/>
    <property type="evidence" value="ECO:0007669"/>
    <property type="project" value="InterPro"/>
</dbReference>
<dbReference type="GO" id="GO:0003735">
    <property type="term" value="F:structural constituent of ribosome"/>
    <property type="evidence" value="ECO:0007669"/>
    <property type="project" value="InterPro"/>
</dbReference>
<dbReference type="GO" id="GO:0032543">
    <property type="term" value="P:mitochondrial translation"/>
    <property type="evidence" value="ECO:0007669"/>
    <property type="project" value="TreeGrafter"/>
</dbReference>
<dbReference type="CDD" id="cd01433">
    <property type="entry name" value="Ribosomal_L16_L10e"/>
    <property type="match status" value="1"/>
</dbReference>
<dbReference type="FunFam" id="3.90.1170.10:FF:000001">
    <property type="entry name" value="50S ribosomal protein L16"/>
    <property type="match status" value="1"/>
</dbReference>
<dbReference type="Gene3D" id="3.90.1170.10">
    <property type="entry name" value="Ribosomal protein L10e/L16"/>
    <property type="match status" value="1"/>
</dbReference>
<dbReference type="HAMAP" id="MF_01342">
    <property type="entry name" value="Ribosomal_uL16"/>
    <property type="match status" value="1"/>
</dbReference>
<dbReference type="InterPro" id="IPR047873">
    <property type="entry name" value="Ribosomal_uL16"/>
</dbReference>
<dbReference type="InterPro" id="IPR000114">
    <property type="entry name" value="Ribosomal_uL16_bact-type"/>
</dbReference>
<dbReference type="InterPro" id="IPR020798">
    <property type="entry name" value="Ribosomal_uL16_CS"/>
</dbReference>
<dbReference type="InterPro" id="IPR016180">
    <property type="entry name" value="Ribosomal_uL16_dom"/>
</dbReference>
<dbReference type="InterPro" id="IPR036920">
    <property type="entry name" value="Ribosomal_uL16_sf"/>
</dbReference>
<dbReference type="NCBIfam" id="TIGR01164">
    <property type="entry name" value="rplP_bact"/>
    <property type="match status" value="1"/>
</dbReference>
<dbReference type="PANTHER" id="PTHR12220">
    <property type="entry name" value="50S/60S RIBOSOMAL PROTEIN L16"/>
    <property type="match status" value="1"/>
</dbReference>
<dbReference type="PANTHER" id="PTHR12220:SF13">
    <property type="entry name" value="LARGE RIBOSOMAL SUBUNIT PROTEIN UL16M"/>
    <property type="match status" value="1"/>
</dbReference>
<dbReference type="Pfam" id="PF00252">
    <property type="entry name" value="Ribosomal_L16"/>
    <property type="match status" value="1"/>
</dbReference>
<dbReference type="PRINTS" id="PR00060">
    <property type="entry name" value="RIBOSOMALL16"/>
</dbReference>
<dbReference type="SUPFAM" id="SSF54686">
    <property type="entry name" value="Ribosomal protein L16p/L10e"/>
    <property type="match status" value="1"/>
</dbReference>
<dbReference type="PROSITE" id="PS00586">
    <property type="entry name" value="RIBOSOMAL_L16_1"/>
    <property type="match status" value="1"/>
</dbReference>
<dbReference type="PROSITE" id="PS00701">
    <property type="entry name" value="RIBOSOMAL_L16_2"/>
    <property type="match status" value="1"/>
</dbReference>
<reference key="1">
    <citation type="journal article" date="1987" name="Curr. Genet.">
        <title>Localization of a r-protein gene within the chloroplast DNA replication origin of Chlamydomonas.</title>
        <authorList>
            <person name="Lou J.K."/>
            <person name="Wu M."/>
            <person name="Chang C.H."/>
            <person name="Cuticchia A.J."/>
        </authorList>
    </citation>
    <scope>NUCLEOTIDE SEQUENCE [GENOMIC DNA]</scope>
</reference>
<organism>
    <name type="scientific">Chlamydomonas sp. (strain WXM)</name>
    <dbReference type="NCBI Taxonomy" id="3057"/>
    <lineage>
        <taxon>Eukaryota</taxon>
        <taxon>Viridiplantae</taxon>
        <taxon>Chlorophyta</taxon>
        <taxon>core chlorophytes</taxon>
        <taxon>Chlorophyceae</taxon>
        <taxon>CS clade</taxon>
        <taxon>Chlamydomonadales</taxon>
        <taxon>Chlamydomonadaceae</taxon>
        <taxon>Chlamydomonas</taxon>
    </lineage>
</organism>
<proteinExistence type="inferred from homology"/>
<accession>P05727</accession>
<evidence type="ECO:0000255" key="1">
    <source>
        <dbReference type="HAMAP-Rule" id="MF_01342"/>
    </source>
</evidence>
<evidence type="ECO:0000305" key="2"/>
<comment type="subunit">
    <text evidence="1">Part of the 50S ribosomal subunit.</text>
</comment>
<comment type="subcellular location">
    <subcellularLocation>
        <location>Plastid</location>
        <location>Chloroplast</location>
    </subcellularLocation>
</comment>
<comment type="similarity">
    <text evidence="1">Belongs to the universal ribosomal protein uL16 family.</text>
</comment>
<keyword id="KW-0150">Chloroplast</keyword>
<keyword id="KW-0934">Plastid</keyword>
<keyword id="KW-0687">Ribonucleoprotein</keyword>
<keyword id="KW-0689">Ribosomal protein</keyword>
<feature type="chain" id="PRO_0000062274" description="Large ribosomal subunit protein uL16c">
    <location>
        <begin position="1"/>
        <end position="136"/>
    </location>
</feature>